<keyword id="KW-0030">Aminoacyl-tRNA synthetase</keyword>
<keyword id="KW-0067">ATP-binding</keyword>
<keyword id="KW-0963">Cytoplasm</keyword>
<keyword id="KW-0436">Ligase</keyword>
<keyword id="KW-0479">Metal-binding</keyword>
<keyword id="KW-0547">Nucleotide-binding</keyword>
<keyword id="KW-0648">Protein biosynthesis</keyword>
<keyword id="KW-0694">RNA-binding</keyword>
<keyword id="KW-0820">tRNA-binding</keyword>
<keyword id="KW-0862">Zinc</keyword>
<dbReference type="EC" id="6.1.1.3" evidence="1"/>
<dbReference type="EMBL" id="BA000018">
    <property type="protein sequence ID" value="BAB42773.1"/>
    <property type="molecule type" value="Genomic_DNA"/>
</dbReference>
<dbReference type="PIR" id="H89951">
    <property type="entry name" value="H89951"/>
</dbReference>
<dbReference type="RefSeq" id="WP_000435143.1">
    <property type="nucleotide sequence ID" value="NC_002745.2"/>
</dbReference>
<dbReference type="SMR" id="P67585"/>
<dbReference type="EnsemblBacteria" id="BAB42773">
    <property type="protein sequence ID" value="BAB42773"/>
    <property type="gene ID" value="BAB42773"/>
</dbReference>
<dbReference type="KEGG" id="sau:SA1506"/>
<dbReference type="HOGENOM" id="CLU_008554_0_1_9"/>
<dbReference type="GO" id="GO:0005737">
    <property type="term" value="C:cytoplasm"/>
    <property type="evidence" value="ECO:0007669"/>
    <property type="project" value="UniProtKB-SubCell"/>
</dbReference>
<dbReference type="GO" id="GO:0005524">
    <property type="term" value="F:ATP binding"/>
    <property type="evidence" value="ECO:0007669"/>
    <property type="project" value="UniProtKB-UniRule"/>
</dbReference>
<dbReference type="GO" id="GO:0140096">
    <property type="term" value="F:catalytic activity, acting on a protein"/>
    <property type="evidence" value="ECO:0007669"/>
    <property type="project" value="UniProtKB-ARBA"/>
</dbReference>
<dbReference type="GO" id="GO:0046872">
    <property type="term" value="F:metal ion binding"/>
    <property type="evidence" value="ECO:0007669"/>
    <property type="project" value="UniProtKB-KW"/>
</dbReference>
<dbReference type="GO" id="GO:0004829">
    <property type="term" value="F:threonine-tRNA ligase activity"/>
    <property type="evidence" value="ECO:0007669"/>
    <property type="project" value="UniProtKB-UniRule"/>
</dbReference>
<dbReference type="GO" id="GO:0016740">
    <property type="term" value="F:transferase activity"/>
    <property type="evidence" value="ECO:0007669"/>
    <property type="project" value="UniProtKB-ARBA"/>
</dbReference>
<dbReference type="GO" id="GO:0000049">
    <property type="term" value="F:tRNA binding"/>
    <property type="evidence" value="ECO:0007669"/>
    <property type="project" value="UniProtKB-KW"/>
</dbReference>
<dbReference type="GO" id="GO:0006435">
    <property type="term" value="P:threonyl-tRNA aminoacylation"/>
    <property type="evidence" value="ECO:0007669"/>
    <property type="project" value="UniProtKB-UniRule"/>
</dbReference>
<dbReference type="CDD" id="cd01667">
    <property type="entry name" value="TGS_ThrRS"/>
    <property type="match status" value="1"/>
</dbReference>
<dbReference type="CDD" id="cd00860">
    <property type="entry name" value="ThrRS_anticodon"/>
    <property type="match status" value="1"/>
</dbReference>
<dbReference type="CDD" id="cd00771">
    <property type="entry name" value="ThrRS_core"/>
    <property type="match status" value="1"/>
</dbReference>
<dbReference type="FunFam" id="3.10.20.30:FF:000005">
    <property type="entry name" value="Threonine--tRNA ligase"/>
    <property type="match status" value="1"/>
</dbReference>
<dbReference type="FunFam" id="3.30.54.20:FF:000002">
    <property type="entry name" value="Threonine--tRNA ligase"/>
    <property type="match status" value="1"/>
</dbReference>
<dbReference type="FunFam" id="3.30.930.10:FF:000002">
    <property type="entry name" value="Threonine--tRNA ligase"/>
    <property type="match status" value="1"/>
</dbReference>
<dbReference type="FunFam" id="3.40.50.800:FF:000001">
    <property type="entry name" value="Threonine--tRNA ligase"/>
    <property type="match status" value="1"/>
</dbReference>
<dbReference type="FunFam" id="3.30.980.10:FF:000005">
    <property type="entry name" value="Threonyl-tRNA synthetase, mitochondrial"/>
    <property type="match status" value="1"/>
</dbReference>
<dbReference type="Gene3D" id="3.10.20.30">
    <property type="match status" value="1"/>
</dbReference>
<dbReference type="Gene3D" id="3.30.54.20">
    <property type="match status" value="1"/>
</dbReference>
<dbReference type="Gene3D" id="3.40.50.800">
    <property type="entry name" value="Anticodon-binding domain"/>
    <property type="match status" value="1"/>
</dbReference>
<dbReference type="Gene3D" id="3.30.930.10">
    <property type="entry name" value="Bira Bifunctional Protein, Domain 2"/>
    <property type="match status" value="1"/>
</dbReference>
<dbReference type="Gene3D" id="3.30.980.10">
    <property type="entry name" value="Threonyl-trna Synthetase, Chain A, domain 2"/>
    <property type="match status" value="1"/>
</dbReference>
<dbReference type="HAMAP" id="MF_00184">
    <property type="entry name" value="Thr_tRNA_synth"/>
    <property type="match status" value="1"/>
</dbReference>
<dbReference type="InterPro" id="IPR002314">
    <property type="entry name" value="aa-tRNA-synt_IIb"/>
</dbReference>
<dbReference type="InterPro" id="IPR006195">
    <property type="entry name" value="aa-tRNA-synth_II"/>
</dbReference>
<dbReference type="InterPro" id="IPR045864">
    <property type="entry name" value="aa-tRNA-synth_II/BPL/LPL"/>
</dbReference>
<dbReference type="InterPro" id="IPR004154">
    <property type="entry name" value="Anticodon-bd"/>
</dbReference>
<dbReference type="InterPro" id="IPR036621">
    <property type="entry name" value="Anticodon-bd_dom_sf"/>
</dbReference>
<dbReference type="InterPro" id="IPR012675">
    <property type="entry name" value="Beta-grasp_dom_sf"/>
</dbReference>
<dbReference type="InterPro" id="IPR004095">
    <property type="entry name" value="TGS"/>
</dbReference>
<dbReference type="InterPro" id="IPR012676">
    <property type="entry name" value="TGS-like"/>
</dbReference>
<dbReference type="InterPro" id="IPR002320">
    <property type="entry name" value="Thr-tRNA-ligase_IIa"/>
</dbReference>
<dbReference type="InterPro" id="IPR018163">
    <property type="entry name" value="Thr/Ala-tRNA-synth_IIc_edit"/>
</dbReference>
<dbReference type="InterPro" id="IPR047246">
    <property type="entry name" value="ThrRS_anticodon"/>
</dbReference>
<dbReference type="InterPro" id="IPR033728">
    <property type="entry name" value="ThrRS_core"/>
</dbReference>
<dbReference type="InterPro" id="IPR012947">
    <property type="entry name" value="tRNA_SAD"/>
</dbReference>
<dbReference type="NCBIfam" id="TIGR00418">
    <property type="entry name" value="thrS"/>
    <property type="match status" value="1"/>
</dbReference>
<dbReference type="PANTHER" id="PTHR11451:SF56">
    <property type="entry name" value="THREONINE--TRNA LIGASE 1"/>
    <property type="match status" value="1"/>
</dbReference>
<dbReference type="PANTHER" id="PTHR11451">
    <property type="entry name" value="THREONINE-TRNA LIGASE"/>
    <property type="match status" value="1"/>
</dbReference>
<dbReference type="Pfam" id="PF03129">
    <property type="entry name" value="HGTP_anticodon"/>
    <property type="match status" value="1"/>
</dbReference>
<dbReference type="Pfam" id="PF02824">
    <property type="entry name" value="TGS"/>
    <property type="match status" value="1"/>
</dbReference>
<dbReference type="Pfam" id="PF00587">
    <property type="entry name" value="tRNA-synt_2b"/>
    <property type="match status" value="1"/>
</dbReference>
<dbReference type="Pfam" id="PF07973">
    <property type="entry name" value="tRNA_SAD"/>
    <property type="match status" value="1"/>
</dbReference>
<dbReference type="PRINTS" id="PR01047">
    <property type="entry name" value="TRNASYNTHTHR"/>
</dbReference>
<dbReference type="SMART" id="SM00863">
    <property type="entry name" value="tRNA_SAD"/>
    <property type="match status" value="1"/>
</dbReference>
<dbReference type="SUPFAM" id="SSF52954">
    <property type="entry name" value="Class II aaRS ABD-related"/>
    <property type="match status" value="1"/>
</dbReference>
<dbReference type="SUPFAM" id="SSF55681">
    <property type="entry name" value="Class II aaRS and biotin synthetases"/>
    <property type="match status" value="1"/>
</dbReference>
<dbReference type="SUPFAM" id="SSF81271">
    <property type="entry name" value="TGS-like"/>
    <property type="match status" value="1"/>
</dbReference>
<dbReference type="SUPFAM" id="SSF55186">
    <property type="entry name" value="ThrRS/AlaRS common domain"/>
    <property type="match status" value="1"/>
</dbReference>
<dbReference type="PROSITE" id="PS50862">
    <property type="entry name" value="AA_TRNA_LIGASE_II"/>
    <property type="match status" value="1"/>
</dbReference>
<dbReference type="PROSITE" id="PS51880">
    <property type="entry name" value="TGS"/>
    <property type="match status" value="1"/>
</dbReference>
<feature type="chain" id="PRO_0000101049" description="Threonine--tRNA ligase">
    <location>
        <begin position="1"/>
        <end position="645"/>
    </location>
</feature>
<feature type="domain" description="TGS" evidence="2">
    <location>
        <begin position="1"/>
        <end position="63"/>
    </location>
</feature>
<feature type="region of interest" description="Catalytic" evidence="1">
    <location>
        <begin position="242"/>
        <end position="540"/>
    </location>
</feature>
<feature type="binding site" evidence="1">
    <location>
        <position position="336"/>
    </location>
    <ligand>
        <name>Zn(2+)</name>
        <dbReference type="ChEBI" id="CHEBI:29105"/>
    </ligand>
</feature>
<feature type="binding site" evidence="1">
    <location>
        <position position="387"/>
    </location>
    <ligand>
        <name>Zn(2+)</name>
        <dbReference type="ChEBI" id="CHEBI:29105"/>
    </ligand>
</feature>
<feature type="binding site" evidence="1">
    <location>
        <position position="517"/>
    </location>
    <ligand>
        <name>Zn(2+)</name>
        <dbReference type="ChEBI" id="CHEBI:29105"/>
    </ligand>
</feature>
<organism>
    <name type="scientific">Staphylococcus aureus (strain N315)</name>
    <dbReference type="NCBI Taxonomy" id="158879"/>
    <lineage>
        <taxon>Bacteria</taxon>
        <taxon>Bacillati</taxon>
        <taxon>Bacillota</taxon>
        <taxon>Bacilli</taxon>
        <taxon>Bacillales</taxon>
        <taxon>Staphylococcaceae</taxon>
        <taxon>Staphylococcus</taxon>
    </lineage>
</organism>
<name>SYT_STAAN</name>
<comment type="function">
    <text evidence="1">Catalyzes the attachment of threonine to tRNA(Thr) in a two-step reaction: L-threonine is first activated by ATP to form Thr-AMP and then transferred to the acceptor end of tRNA(Thr). Also edits incorrectly charged L-seryl-tRNA(Thr).</text>
</comment>
<comment type="catalytic activity">
    <reaction evidence="1">
        <text>tRNA(Thr) + L-threonine + ATP = L-threonyl-tRNA(Thr) + AMP + diphosphate + H(+)</text>
        <dbReference type="Rhea" id="RHEA:24624"/>
        <dbReference type="Rhea" id="RHEA-COMP:9670"/>
        <dbReference type="Rhea" id="RHEA-COMP:9704"/>
        <dbReference type="ChEBI" id="CHEBI:15378"/>
        <dbReference type="ChEBI" id="CHEBI:30616"/>
        <dbReference type="ChEBI" id="CHEBI:33019"/>
        <dbReference type="ChEBI" id="CHEBI:57926"/>
        <dbReference type="ChEBI" id="CHEBI:78442"/>
        <dbReference type="ChEBI" id="CHEBI:78534"/>
        <dbReference type="ChEBI" id="CHEBI:456215"/>
        <dbReference type="EC" id="6.1.1.3"/>
    </reaction>
</comment>
<comment type="cofactor">
    <cofactor evidence="1">
        <name>Zn(2+)</name>
        <dbReference type="ChEBI" id="CHEBI:29105"/>
    </cofactor>
    <text evidence="1">Binds 1 zinc ion per subunit.</text>
</comment>
<comment type="subunit">
    <text evidence="1">Homodimer.</text>
</comment>
<comment type="subcellular location">
    <subcellularLocation>
        <location evidence="1">Cytoplasm</location>
    </subcellularLocation>
</comment>
<comment type="similarity">
    <text evidence="1">Belongs to the class-II aminoacyl-tRNA synthetase family.</text>
</comment>
<protein>
    <recommendedName>
        <fullName evidence="1">Threonine--tRNA ligase</fullName>
        <ecNumber evidence="1">6.1.1.3</ecNumber>
    </recommendedName>
    <alternativeName>
        <fullName evidence="1">Threonyl-tRNA synthetase</fullName>
        <shortName evidence="1">ThrRS</shortName>
    </alternativeName>
</protein>
<evidence type="ECO:0000255" key="1">
    <source>
        <dbReference type="HAMAP-Rule" id="MF_00184"/>
    </source>
</evidence>
<evidence type="ECO:0000255" key="2">
    <source>
        <dbReference type="PROSITE-ProRule" id="PRU01228"/>
    </source>
</evidence>
<sequence length="645" mass="74388">MEQINIQFPDGNKKAFDKGTTTEDIAQSISPGLRKKAVAGKFNGQLVDLTKPLETDGSIGIVTPGSEEALEVLRHSTAHLMAHAIKRLYGNVKFGVGPVIEGGFYYDFDIDQNISSDDFEQIEKTMKQIVNENMKIERKVVSRDEAKELFSNDEYKLELIDAIPEDENVTLYSQGDFTDLCRGVHVPSTAKIKEFKLLSTAGAYWRGDSNNKMLQRIYGTAFFDKKELKAHLQMLEERKERDHRKIGKELELFTNSQLVGAGLPLWLPNGATIRREIERYIVDKEVSMGYDHVYTPVLANVDLYKTSGHWDHYQEDMFPPMQLDETESMVLRPMNCPHHMMIYANKPHSYRELPIRIAELGTMHRYEASGAVSGLQRVRGMTLNDSHIFVRPDQIKEEFKRVVNMIIDVYKDFGFEDYSFRLSYRDPEDKEKYFDDDDMWNKAENMLKEAADELGLSYEEAIGEAAFYGPKLDVQVKTAMGKEETLSTAQLDFLLPERFDLTYIGQDGEHHRPVVIHRGVVSTMERFVAFLTEETKGAFPTWLAPKQVQIIPVNVDLHYDYARQLQDELKSQGVRVSIDDRNEKMGYKIREAQMQKIPYQIVVGDKEVENNQVNVRQYGSQDQETVEKDEFIWNLVDEIRLKKHR</sequence>
<gene>
    <name evidence="1" type="primary">thrS</name>
    <name type="ordered locus">SA1506</name>
</gene>
<proteinExistence type="evidence at protein level"/>
<accession>P67585</accession>
<accession>Q99TH9</accession>
<reference key="1">
    <citation type="journal article" date="2001" name="Lancet">
        <title>Whole genome sequencing of meticillin-resistant Staphylococcus aureus.</title>
        <authorList>
            <person name="Kuroda M."/>
            <person name="Ohta T."/>
            <person name="Uchiyama I."/>
            <person name="Baba T."/>
            <person name="Yuzawa H."/>
            <person name="Kobayashi I."/>
            <person name="Cui L."/>
            <person name="Oguchi A."/>
            <person name="Aoki K."/>
            <person name="Nagai Y."/>
            <person name="Lian J.-Q."/>
            <person name="Ito T."/>
            <person name="Kanamori M."/>
            <person name="Matsumaru H."/>
            <person name="Maruyama A."/>
            <person name="Murakami H."/>
            <person name="Hosoyama A."/>
            <person name="Mizutani-Ui Y."/>
            <person name="Takahashi N.K."/>
            <person name="Sawano T."/>
            <person name="Inoue R."/>
            <person name="Kaito C."/>
            <person name="Sekimizu K."/>
            <person name="Hirakawa H."/>
            <person name="Kuhara S."/>
            <person name="Goto S."/>
            <person name="Yabuzaki J."/>
            <person name="Kanehisa M."/>
            <person name="Yamashita A."/>
            <person name="Oshima K."/>
            <person name="Furuya K."/>
            <person name="Yoshino C."/>
            <person name="Shiba T."/>
            <person name="Hattori M."/>
            <person name="Ogasawara N."/>
            <person name="Hayashi H."/>
            <person name="Hiramatsu K."/>
        </authorList>
    </citation>
    <scope>NUCLEOTIDE SEQUENCE [LARGE SCALE GENOMIC DNA]</scope>
    <source>
        <strain>N315</strain>
    </source>
</reference>
<reference key="2">
    <citation type="submission" date="2007-10" db="UniProtKB">
        <title>Shotgun proteomic analysis of total and membrane protein extracts of S. aureus strain N315.</title>
        <authorList>
            <person name="Vaezzadeh A.R."/>
            <person name="Deshusses J."/>
            <person name="Lescuyer P."/>
            <person name="Hochstrasser D.F."/>
        </authorList>
    </citation>
    <scope>IDENTIFICATION BY MASS SPECTROMETRY [LARGE SCALE ANALYSIS]</scope>
    <source>
        <strain>N315</strain>
    </source>
</reference>